<reference key="1">
    <citation type="journal article" date="2006" name="BMC Genomics">
        <title>The genome of the square archaeon Haloquadratum walsbyi: life at the limits of water activity.</title>
        <authorList>
            <person name="Bolhuis H."/>
            <person name="Palm P."/>
            <person name="Wende A."/>
            <person name="Falb M."/>
            <person name="Rampp M."/>
            <person name="Rodriguez-Valera F."/>
            <person name="Pfeiffer F."/>
            <person name="Oesterhelt D."/>
        </authorList>
    </citation>
    <scope>NUCLEOTIDE SEQUENCE [LARGE SCALE GENOMIC DNA]</scope>
    <source>
        <strain>DSM 16790 / HBSQ001</strain>
    </source>
</reference>
<name>PDXT_HALWD</name>
<dbReference type="EC" id="4.3.3.6" evidence="1"/>
<dbReference type="EC" id="3.5.1.2" evidence="1"/>
<dbReference type="EMBL" id="AM180088">
    <property type="protein sequence ID" value="CAJ51430.1"/>
    <property type="molecule type" value="Genomic_DNA"/>
</dbReference>
<dbReference type="RefSeq" id="WP_011570589.1">
    <property type="nucleotide sequence ID" value="NC_008212.1"/>
</dbReference>
<dbReference type="SMR" id="Q18KL6"/>
<dbReference type="STRING" id="362976.HQ_1301A"/>
<dbReference type="GeneID" id="4194122"/>
<dbReference type="KEGG" id="hwa:HQ_1301A"/>
<dbReference type="eggNOG" id="arCOG00034">
    <property type="taxonomic scope" value="Archaea"/>
</dbReference>
<dbReference type="HOGENOM" id="CLU_069674_2_0_2"/>
<dbReference type="UniPathway" id="UPA00245"/>
<dbReference type="Proteomes" id="UP000001975">
    <property type="component" value="Chromosome"/>
</dbReference>
<dbReference type="GO" id="GO:0005829">
    <property type="term" value="C:cytosol"/>
    <property type="evidence" value="ECO:0007669"/>
    <property type="project" value="TreeGrafter"/>
</dbReference>
<dbReference type="GO" id="GO:1903600">
    <property type="term" value="C:glutaminase complex"/>
    <property type="evidence" value="ECO:0007669"/>
    <property type="project" value="TreeGrafter"/>
</dbReference>
<dbReference type="GO" id="GO:0004359">
    <property type="term" value="F:glutaminase activity"/>
    <property type="evidence" value="ECO:0007669"/>
    <property type="project" value="UniProtKB-UniRule"/>
</dbReference>
<dbReference type="GO" id="GO:0036381">
    <property type="term" value="F:pyridoxal 5'-phosphate synthase (glutamine hydrolysing) activity"/>
    <property type="evidence" value="ECO:0007669"/>
    <property type="project" value="UniProtKB-UniRule"/>
</dbReference>
<dbReference type="GO" id="GO:0006543">
    <property type="term" value="P:glutamine catabolic process"/>
    <property type="evidence" value="ECO:0007669"/>
    <property type="project" value="UniProtKB-UniRule"/>
</dbReference>
<dbReference type="GO" id="GO:0042823">
    <property type="term" value="P:pyridoxal phosphate biosynthetic process"/>
    <property type="evidence" value="ECO:0007669"/>
    <property type="project" value="UniProtKB-UniRule"/>
</dbReference>
<dbReference type="GO" id="GO:0008614">
    <property type="term" value="P:pyridoxine metabolic process"/>
    <property type="evidence" value="ECO:0007669"/>
    <property type="project" value="TreeGrafter"/>
</dbReference>
<dbReference type="CDD" id="cd01749">
    <property type="entry name" value="GATase1_PB"/>
    <property type="match status" value="1"/>
</dbReference>
<dbReference type="FunFam" id="3.40.50.880:FF:000010">
    <property type="entry name" value="uncharacterized protein LOC100176842 isoform X2"/>
    <property type="match status" value="1"/>
</dbReference>
<dbReference type="Gene3D" id="3.40.50.880">
    <property type="match status" value="1"/>
</dbReference>
<dbReference type="HAMAP" id="MF_01615">
    <property type="entry name" value="PdxT"/>
    <property type="match status" value="1"/>
</dbReference>
<dbReference type="InterPro" id="IPR029062">
    <property type="entry name" value="Class_I_gatase-like"/>
</dbReference>
<dbReference type="InterPro" id="IPR002161">
    <property type="entry name" value="PdxT/SNO"/>
</dbReference>
<dbReference type="InterPro" id="IPR021196">
    <property type="entry name" value="PdxT/SNO_CS"/>
</dbReference>
<dbReference type="NCBIfam" id="TIGR03800">
    <property type="entry name" value="PLP_synth_Pdx2"/>
    <property type="match status" value="1"/>
</dbReference>
<dbReference type="PANTHER" id="PTHR31559">
    <property type="entry name" value="PYRIDOXAL 5'-PHOSPHATE SYNTHASE SUBUNIT SNO"/>
    <property type="match status" value="1"/>
</dbReference>
<dbReference type="PANTHER" id="PTHR31559:SF0">
    <property type="entry name" value="PYRIDOXAL 5'-PHOSPHATE SYNTHASE SUBUNIT SNO1-RELATED"/>
    <property type="match status" value="1"/>
</dbReference>
<dbReference type="Pfam" id="PF01174">
    <property type="entry name" value="SNO"/>
    <property type="match status" value="1"/>
</dbReference>
<dbReference type="PIRSF" id="PIRSF005639">
    <property type="entry name" value="Glut_amidoT_SNO"/>
    <property type="match status" value="1"/>
</dbReference>
<dbReference type="SUPFAM" id="SSF52317">
    <property type="entry name" value="Class I glutamine amidotransferase-like"/>
    <property type="match status" value="1"/>
</dbReference>
<dbReference type="PROSITE" id="PS01236">
    <property type="entry name" value="PDXT_SNO_1"/>
    <property type="match status" value="1"/>
</dbReference>
<dbReference type="PROSITE" id="PS51130">
    <property type="entry name" value="PDXT_SNO_2"/>
    <property type="match status" value="1"/>
</dbReference>
<keyword id="KW-0315">Glutamine amidotransferase</keyword>
<keyword id="KW-0378">Hydrolase</keyword>
<keyword id="KW-0456">Lyase</keyword>
<keyword id="KW-0663">Pyridoxal phosphate</keyword>
<keyword id="KW-1185">Reference proteome</keyword>
<organism>
    <name type="scientific">Haloquadratum walsbyi (strain DSM 16790 / HBSQ001)</name>
    <dbReference type="NCBI Taxonomy" id="362976"/>
    <lineage>
        <taxon>Archaea</taxon>
        <taxon>Methanobacteriati</taxon>
        <taxon>Methanobacteriota</taxon>
        <taxon>Stenosarchaea group</taxon>
        <taxon>Halobacteria</taxon>
        <taxon>Halobacteriales</taxon>
        <taxon>Haloferacaceae</taxon>
        <taxon>Haloquadratum</taxon>
    </lineage>
</organism>
<comment type="function">
    <text evidence="1">Catalyzes the hydrolysis of glutamine to glutamate and ammonia as part of the biosynthesis of pyridoxal 5'-phosphate. The resulting ammonia molecule is channeled to the active site of PdxS.</text>
</comment>
<comment type="catalytic activity">
    <reaction evidence="1">
        <text>aldehydo-D-ribose 5-phosphate + D-glyceraldehyde 3-phosphate + L-glutamine = pyridoxal 5'-phosphate + L-glutamate + phosphate + 3 H2O + H(+)</text>
        <dbReference type="Rhea" id="RHEA:31507"/>
        <dbReference type="ChEBI" id="CHEBI:15377"/>
        <dbReference type="ChEBI" id="CHEBI:15378"/>
        <dbReference type="ChEBI" id="CHEBI:29985"/>
        <dbReference type="ChEBI" id="CHEBI:43474"/>
        <dbReference type="ChEBI" id="CHEBI:58273"/>
        <dbReference type="ChEBI" id="CHEBI:58359"/>
        <dbReference type="ChEBI" id="CHEBI:59776"/>
        <dbReference type="ChEBI" id="CHEBI:597326"/>
        <dbReference type="EC" id="4.3.3.6"/>
    </reaction>
</comment>
<comment type="catalytic activity">
    <reaction evidence="1">
        <text>L-glutamine + H2O = L-glutamate + NH4(+)</text>
        <dbReference type="Rhea" id="RHEA:15889"/>
        <dbReference type="ChEBI" id="CHEBI:15377"/>
        <dbReference type="ChEBI" id="CHEBI:28938"/>
        <dbReference type="ChEBI" id="CHEBI:29985"/>
        <dbReference type="ChEBI" id="CHEBI:58359"/>
        <dbReference type="EC" id="3.5.1.2"/>
    </reaction>
</comment>
<comment type="pathway">
    <text evidence="1">Cofactor biosynthesis; pyridoxal 5'-phosphate biosynthesis.</text>
</comment>
<comment type="subunit">
    <text evidence="1">In the presence of PdxS, forms a dodecamer of heterodimers. Only shows activity in the heterodimer.</text>
</comment>
<comment type="similarity">
    <text evidence="1">Belongs to the glutaminase PdxT/SNO family.</text>
</comment>
<feature type="chain" id="PRO_0000255820" description="Pyridoxal 5'-phosphate synthase subunit PdxT">
    <location>
        <begin position="1"/>
        <end position="205"/>
    </location>
</feature>
<feature type="active site" description="Nucleophile" evidence="1">
    <location>
        <position position="85"/>
    </location>
</feature>
<feature type="active site" description="Charge relay system" evidence="1">
    <location>
        <position position="176"/>
    </location>
</feature>
<feature type="active site" description="Charge relay system" evidence="1">
    <location>
        <position position="178"/>
    </location>
</feature>
<feature type="binding site" evidence="1">
    <location>
        <begin position="53"/>
        <end position="55"/>
    </location>
    <ligand>
        <name>L-glutamine</name>
        <dbReference type="ChEBI" id="CHEBI:58359"/>
    </ligand>
</feature>
<feature type="binding site" evidence="1">
    <location>
        <position position="112"/>
    </location>
    <ligand>
        <name>L-glutamine</name>
        <dbReference type="ChEBI" id="CHEBI:58359"/>
    </ligand>
</feature>
<feature type="binding site" evidence="1">
    <location>
        <begin position="140"/>
        <end position="141"/>
    </location>
    <ligand>
        <name>L-glutamine</name>
        <dbReference type="ChEBI" id="CHEBI:58359"/>
    </ligand>
</feature>
<accession>Q18KL6</accession>
<proteinExistence type="inferred from homology"/>
<evidence type="ECO:0000255" key="1">
    <source>
        <dbReference type="HAMAP-Rule" id="MF_01615"/>
    </source>
</evidence>
<gene>
    <name evidence="1" type="primary">pdxT</name>
    <name type="ordered locus">HQ_1301A</name>
</gene>
<sequence length="205" mass="21713">MIQAGVVAVQGDVSEHAAAIRRAGESHSISVEIVEIRQSGVVPDCDVLLIPGGESTAISRLLDREGIDTEIQAHVEAGKPVLATCAGLIIAARDAKDDRVETLDIIDVTVDRNAFGRQIDSFEAPLDVDGLDEPFPAVFIRAPVIDAAGEDATVLAQWEDNPVAVQDGAVVATAFHPELTPDSRIHDLAFFANQNNNVDTAVSTD</sequence>
<protein>
    <recommendedName>
        <fullName evidence="1">Pyridoxal 5'-phosphate synthase subunit PdxT</fullName>
        <ecNumber evidence="1">4.3.3.6</ecNumber>
    </recommendedName>
    <alternativeName>
        <fullName evidence="1">Pdx2</fullName>
    </alternativeName>
    <alternativeName>
        <fullName evidence="1">Pyridoxal 5'-phosphate synthase glutaminase subunit</fullName>
        <ecNumber evidence="1">3.5.1.2</ecNumber>
    </alternativeName>
</protein>